<organism>
    <name type="scientific">Bifidobacterium longum (strain DJO10A)</name>
    <dbReference type="NCBI Taxonomy" id="205913"/>
    <lineage>
        <taxon>Bacteria</taxon>
        <taxon>Bacillati</taxon>
        <taxon>Actinomycetota</taxon>
        <taxon>Actinomycetes</taxon>
        <taxon>Bifidobacteriales</taxon>
        <taxon>Bifidobacteriaceae</taxon>
        <taxon>Bifidobacterium</taxon>
    </lineage>
</organism>
<evidence type="ECO:0000255" key="1">
    <source>
        <dbReference type="HAMAP-Rule" id="MF_00385"/>
    </source>
</evidence>
<evidence type="ECO:0000256" key="2">
    <source>
        <dbReference type="SAM" id="MobiDB-lite"/>
    </source>
</evidence>
<evidence type="ECO:0000305" key="3"/>
<sequence>MATKIRLKRQGKKFYAFYRVVVVDSRKKRDGKVIEEIGTYNPNTQPSTIQIKSDRAQYWLGVGAQPSEPVFKLLNITGDWQKYKGLEGAEGTLKTVEAGPDAEARIAAVENQAQKLKAAKAEAAAKAKAEAEAAAAAEEAPAEEAAEEAPAED</sequence>
<name>RS16_BIFLD</name>
<proteinExistence type="inferred from homology"/>
<gene>
    <name evidence="1" type="primary">rpsP</name>
    <name type="ordered locus">BLD_1052</name>
</gene>
<protein>
    <recommendedName>
        <fullName evidence="1">Small ribosomal subunit protein bS16</fullName>
    </recommendedName>
    <alternativeName>
        <fullName evidence="3">30S ribosomal protein S16</fullName>
    </alternativeName>
</protein>
<comment type="similarity">
    <text evidence="1">Belongs to the bacterial ribosomal protein bS16 family.</text>
</comment>
<accession>B3DTM9</accession>
<feature type="chain" id="PRO_1000196339" description="Small ribosomal subunit protein bS16">
    <location>
        <begin position="1"/>
        <end position="153"/>
    </location>
</feature>
<feature type="region of interest" description="Disordered" evidence="2">
    <location>
        <begin position="121"/>
        <end position="153"/>
    </location>
</feature>
<feature type="compositionally biased region" description="Basic and acidic residues" evidence="2">
    <location>
        <begin position="121"/>
        <end position="131"/>
    </location>
</feature>
<feature type="compositionally biased region" description="Acidic residues" evidence="2">
    <location>
        <begin position="140"/>
        <end position="153"/>
    </location>
</feature>
<keyword id="KW-0687">Ribonucleoprotein</keyword>
<keyword id="KW-0689">Ribosomal protein</keyword>
<reference key="1">
    <citation type="journal article" date="2008" name="BMC Genomics">
        <title>Comparative genomic analysis of the gut bacterium Bifidobacterium longum reveals loci susceptible to deletion during pure culture growth.</title>
        <authorList>
            <person name="Lee J.H."/>
            <person name="Karamychev V.N."/>
            <person name="Kozyavkin S.A."/>
            <person name="Mills D."/>
            <person name="Pavlov A.R."/>
            <person name="Pavlova N.V."/>
            <person name="Polouchine N.N."/>
            <person name="Richardson P.M."/>
            <person name="Shakhova V.V."/>
            <person name="Slesarev A.I."/>
            <person name="Weimer B."/>
            <person name="O'Sullivan D.J."/>
        </authorList>
    </citation>
    <scope>NUCLEOTIDE SEQUENCE [LARGE SCALE GENOMIC DNA]</scope>
    <source>
        <strain>DJO10A</strain>
    </source>
</reference>
<dbReference type="EMBL" id="CP000605">
    <property type="protein sequence ID" value="ACD98498.1"/>
    <property type="molecule type" value="Genomic_DNA"/>
</dbReference>
<dbReference type="RefSeq" id="WP_010081161.1">
    <property type="nucleotide sequence ID" value="NC_010816.1"/>
</dbReference>
<dbReference type="SMR" id="B3DTM9"/>
<dbReference type="KEGG" id="blj:BLD_1052"/>
<dbReference type="HOGENOM" id="CLU_100590_1_0_11"/>
<dbReference type="Proteomes" id="UP000002419">
    <property type="component" value="Chromosome"/>
</dbReference>
<dbReference type="GO" id="GO:0005737">
    <property type="term" value="C:cytoplasm"/>
    <property type="evidence" value="ECO:0007669"/>
    <property type="project" value="UniProtKB-ARBA"/>
</dbReference>
<dbReference type="GO" id="GO:0015935">
    <property type="term" value="C:small ribosomal subunit"/>
    <property type="evidence" value="ECO:0007669"/>
    <property type="project" value="TreeGrafter"/>
</dbReference>
<dbReference type="GO" id="GO:0003735">
    <property type="term" value="F:structural constituent of ribosome"/>
    <property type="evidence" value="ECO:0007669"/>
    <property type="project" value="InterPro"/>
</dbReference>
<dbReference type="GO" id="GO:0006412">
    <property type="term" value="P:translation"/>
    <property type="evidence" value="ECO:0007669"/>
    <property type="project" value="UniProtKB-UniRule"/>
</dbReference>
<dbReference type="Gene3D" id="3.30.1320.10">
    <property type="match status" value="1"/>
</dbReference>
<dbReference type="HAMAP" id="MF_00385">
    <property type="entry name" value="Ribosomal_bS16"/>
    <property type="match status" value="1"/>
</dbReference>
<dbReference type="InterPro" id="IPR000307">
    <property type="entry name" value="Ribosomal_bS16"/>
</dbReference>
<dbReference type="InterPro" id="IPR020592">
    <property type="entry name" value="Ribosomal_bS16_CS"/>
</dbReference>
<dbReference type="InterPro" id="IPR023803">
    <property type="entry name" value="Ribosomal_bS16_dom_sf"/>
</dbReference>
<dbReference type="NCBIfam" id="NF011093">
    <property type="entry name" value="PRK14520.1"/>
    <property type="match status" value="1"/>
</dbReference>
<dbReference type="NCBIfam" id="TIGR00002">
    <property type="entry name" value="S16"/>
    <property type="match status" value="1"/>
</dbReference>
<dbReference type="PANTHER" id="PTHR12919">
    <property type="entry name" value="30S RIBOSOMAL PROTEIN S16"/>
    <property type="match status" value="1"/>
</dbReference>
<dbReference type="PANTHER" id="PTHR12919:SF20">
    <property type="entry name" value="SMALL RIBOSOMAL SUBUNIT PROTEIN BS16M"/>
    <property type="match status" value="1"/>
</dbReference>
<dbReference type="Pfam" id="PF00886">
    <property type="entry name" value="Ribosomal_S16"/>
    <property type="match status" value="1"/>
</dbReference>
<dbReference type="SUPFAM" id="SSF54565">
    <property type="entry name" value="Ribosomal protein S16"/>
    <property type="match status" value="1"/>
</dbReference>
<dbReference type="PROSITE" id="PS00732">
    <property type="entry name" value="RIBOSOMAL_S16"/>
    <property type="match status" value="1"/>
</dbReference>